<feature type="chain" id="PRO_0000340763" description="3-hydroxyacyl-[acyl-carrier-protein] dehydratase FabZ">
    <location>
        <begin position="1"/>
        <end position="148"/>
    </location>
</feature>
<feature type="active site" evidence="1">
    <location>
        <position position="48"/>
    </location>
</feature>
<keyword id="KW-0963">Cytoplasm</keyword>
<keyword id="KW-0441">Lipid A biosynthesis</keyword>
<keyword id="KW-0444">Lipid biosynthesis</keyword>
<keyword id="KW-0443">Lipid metabolism</keyword>
<keyword id="KW-0456">Lyase</keyword>
<reference key="1">
    <citation type="submission" date="2006-11" db="EMBL/GenBank/DDBJ databases">
        <title>Sequence of Campylobacter fetus subsp. fetus 82-40.</title>
        <authorList>
            <person name="Fouts D.E."/>
            <person name="Nelson K.E."/>
        </authorList>
    </citation>
    <scope>NUCLEOTIDE SEQUENCE [LARGE SCALE GENOMIC DNA]</scope>
    <source>
        <strain>82-40</strain>
    </source>
</reference>
<evidence type="ECO:0000255" key="1">
    <source>
        <dbReference type="HAMAP-Rule" id="MF_00406"/>
    </source>
</evidence>
<evidence type="ECO:0000305" key="2"/>
<gene>
    <name evidence="1" type="primary">fabZ</name>
    <name type="ordered locus">CFF8240_0314</name>
</gene>
<sequence>MIDVVEIQKILPHRYPFLLIDRVCELETGKSVYAYKNITIAEQIFEGHFPGHPIYPGVMIIEGMAQAGGILAFKSAEDPSGLSIENKVVYFMSIDRAKFRNPVKPGDKLEYRLEVLKHKGNVWVLDGKAYVDDKLVAEAELKAMIVDK</sequence>
<dbReference type="EC" id="4.2.1.59" evidence="1"/>
<dbReference type="EMBL" id="CP000487">
    <property type="protein sequence ID" value="ABK83240.1"/>
    <property type="status" value="ALT_INIT"/>
    <property type="molecule type" value="Genomic_DNA"/>
</dbReference>
<dbReference type="RefSeq" id="WP_002848435.1">
    <property type="nucleotide sequence ID" value="NC_008599.1"/>
</dbReference>
<dbReference type="SMR" id="A0RMT3"/>
<dbReference type="GeneID" id="61064158"/>
<dbReference type="KEGG" id="cff:CFF8240_0314"/>
<dbReference type="eggNOG" id="COG0764">
    <property type="taxonomic scope" value="Bacteria"/>
</dbReference>
<dbReference type="HOGENOM" id="CLU_078912_3_0_7"/>
<dbReference type="Proteomes" id="UP000000760">
    <property type="component" value="Chromosome"/>
</dbReference>
<dbReference type="GO" id="GO:0005737">
    <property type="term" value="C:cytoplasm"/>
    <property type="evidence" value="ECO:0007669"/>
    <property type="project" value="UniProtKB-SubCell"/>
</dbReference>
<dbReference type="GO" id="GO:0016020">
    <property type="term" value="C:membrane"/>
    <property type="evidence" value="ECO:0007669"/>
    <property type="project" value="GOC"/>
</dbReference>
<dbReference type="GO" id="GO:0019171">
    <property type="term" value="F:(3R)-hydroxyacyl-[acyl-carrier-protein] dehydratase activity"/>
    <property type="evidence" value="ECO:0007669"/>
    <property type="project" value="UniProtKB-EC"/>
</dbReference>
<dbReference type="GO" id="GO:0006633">
    <property type="term" value="P:fatty acid biosynthetic process"/>
    <property type="evidence" value="ECO:0007669"/>
    <property type="project" value="UniProtKB-UniRule"/>
</dbReference>
<dbReference type="GO" id="GO:0009245">
    <property type="term" value="P:lipid A biosynthetic process"/>
    <property type="evidence" value="ECO:0007669"/>
    <property type="project" value="UniProtKB-UniRule"/>
</dbReference>
<dbReference type="CDD" id="cd01288">
    <property type="entry name" value="FabZ"/>
    <property type="match status" value="1"/>
</dbReference>
<dbReference type="FunFam" id="3.10.129.10:FF:000001">
    <property type="entry name" value="3-hydroxyacyl-[acyl-carrier-protein] dehydratase FabZ"/>
    <property type="match status" value="1"/>
</dbReference>
<dbReference type="Gene3D" id="3.10.129.10">
    <property type="entry name" value="Hotdog Thioesterase"/>
    <property type="match status" value="1"/>
</dbReference>
<dbReference type="HAMAP" id="MF_00406">
    <property type="entry name" value="FabZ"/>
    <property type="match status" value="1"/>
</dbReference>
<dbReference type="InterPro" id="IPR013114">
    <property type="entry name" value="FabA_FabZ"/>
</dbReference>
<dbReference type="InterPro" id="IPR010084">
    <property type="entry name" value="FabZ"/>
</dbReference>
<dbReference type="InterPro" id="IPR029069">
    <property type="entry name" value="HotDog_dom_sf"/>
</dbReference>
<dbReference type="NCBIfam" id="TIGR01750">
    <property type="entry name" value="fabZ"/>
    <property type="match status" value="1"/>
</dbReference>
<dbReference type="NCBIfam" id="NF000582">
    <property type="entry name" value="PRK00006.1"/>
    <property type="match status" value="1"/>
</dbReference>
<dbReference type="PANTHER" id="PTHR30272">
    <property type="entry name" value="3-HYDROXYACYL-[ACYL-CARRIER-PROTEIN] DEHYDRATASE"/>
    <property type="match status" value="1"/>
</dbReference>
<dbReference type="PANTHER" id="PTHR30272:SF1">
    <property type="entry name" value="3-HYDROXYACYL-[ACYL-CARRIER-PROTEIN] DEHYDRATASE"/>
    <property type="match status" value="1"/>
</dbReference>
<dbReference type="Pfam" id="PF07977">
    <property type="entry name" value="FabA"/>
    <property type="match status" value="1"/>
</dbReference>
<dbReference type="SUPFAM" id="SSF54637">
    <property type="entry name" value="Thioesterase/thiol ester dehydrase-isomerase"/>
    <property type="match status" value="1"/>
</dbReference>
<organism>
    <name type="scientific">Campylobacter fetus subsp. fetus (strain 82-40)</name>
    <dbReference type="NCBI Taxonomy" id="360106"/>
    <lineage>
        <taxon>Bacteria</taxon>
        <taxon>Pseudomonadati</taxon>
        <taxon>Campylobacterota</taxon>
        <taxon>Epsilonproteobacteria</taxon>
        <taxon>Campylobacterales</taxon>
        <taxon>Campylobacteraceae</taxon>
        <taxon>Campylobacter</taxon>
    </lineage>
</organism>
<protein>
    <recommendedName>
        <fullName evidence="1">3-hydroxyacyl-[acyl-carrier-protein] dehydratase FabZ</fullName>
        <ecNumber evidence="1">4.2.1.59</ecNumber>
    </recommendedName>
    <alternativeName>
        <fullName evidence="1">(3R)-hydroxymyristoyl-[acyl-carrier-protein] dehydratase</fullName>
        <shortName evidence="1">(3R)-hydroxymyristoyl-ACP dehydrase</shortName>
    </alternativeName>
    <alternativeName>
        <fullName evidence="1">Beta-hydroxyacyl-ACP dehydratase</fullName>
    </alternativeName>
</protein>
<comment type="function">
    <text evidence="1">Involved in unsaturated fatty acids biosynthesis. Catalyzes the dehydration of short chain beta-hydroxyacyl-ACPs and long chain saturated and unsaturated beta-hydroxyacyl-ACPs.</text>
</comment>
<comment type="catalytic activity">
    <reaction evidence="1">
        <text>a (3R)-hydroxyacyl-[ACP] = a (2E)-enoyl-[ACP] + H2O</text>
        <dbReference type="Rhea" id="RHEA:13097"/>
        <dbReference type="Rhea" id="RHEA-COMP:9925"/>
        <dbReference type="Rhea" id="RHEA-COMP:9945"/>
        <dbReference type="ChEBI" id="CHEBI:15377"/>
        <dbReference type="ChEBI" id="CHEBI:78784"/>
        <dbReference type="ChEBI" id="CHEBI:78827"/>
        <dbReference type="EC" id="4.2.1.59"/>
    </reaction>
</comment>
<comment type="subcellular location">
    <subcellularLocation>
        <location evidence="1">Cytoplasm</location>
    </subcellularLocation>
</comment>
<comment type="similarity">
    <text evidence="1">Belongs to the thioester dehydratase family. FabZ subfamily.</text>
</comment>
<comment type="sequence caution" evidence="2">
    <conflict type="erroneous initiation">
        <sequence resource="EMBL-CDS" id="ABK83240"/>
    </conflict>
</comment>
<name>FABZ_CAMFF</name>
<accession>A0RMT3</accession>
<proteinExistence type="inferred from homology"/>